<keyword id="KW-0249">Electron transport</keyword>
<keyword id="KW-0349">Heme</keyword>
<keyword id="KW-0408">Iron</keyword>
<keyword id="KW-0472">Membrane</keyword>
<keyword id="KW-0479">Metal-binding</keyword>
<keyword id="KW-0496">Mitochondrion</keyword>
<keyword id="KW-0999">Mitochondrion inner membrane</keyword>
<keyword id="KW-0679">Respiratory chain</keyword>
<keyword id="KW-0812">Transmembrane</keyword>
<keyword id="KW-1133">Transmembrane helix</keyword>
<keyword id="KW-0813">Transport</keyword>
<keyword id="KW-0830">Ubiquinone</keyword>
<organism>
    <name type="scientific">Dipodomys spectabilis</name>
    <name type="common">Banner-tailed kangaroo rat</name>
    <dbReference type="NCBI Taxonomy" id="105255"/>
    <lineage>
        <taxon>Eukaryota</taxon>
        <taxon>Metazoa</taxon>
        <taxon>Chordata</taxon>
        <taxon>Craniata</taxon>
        <taxon>Vertebrata</taxon>
        <taxon>Euteleostomi</taxon>
        <taxon>Mammalia</taxon>
        <taxon>Eutheria</taxon>
        <taxon>Euarchontoglires</taxon>
        <taxon>Glires</taxon>
        <taxon>Rodentia</taxon>
        <taxon>Castorimorpha</taxon>
        <taxon>Heteromyidae</taxon>
        <taxon>Dipodomyinae</taxon>
        <taxon>Dipodomys</taxon>
    </lineage>
</organism>
<evidence type="ECO:0000250" key="1"/>
<evidence type="ECO:0000250" key="2">
    <source>
        <dbReference type="UniProtKB" id="P00157"/>
    </source>
</evidence>
<evidence type="ECO:0000255" key="3">
    <source>
        <dbReference type="PROSITE-ProRule" id="PRU00967"/>
    </source>
</evidence>
<evidence type="ECO:0000255" key="4">
    <source>
        <dbReference type="PROSITE-ProRule" id="PRU00968"/>
    </source>
</evidence>
<comment type="function">
    <text evidence="2">Component of the ubiquinol-cytochrome c reductase complex (complex III or cytochrome b-c1 complex) that is part of the mitochondrial respiratory chain. The b-c1 complex mediates electron transfer from ubiquinol to cytochrome c. Contributes to the generation of a proton gradient across the mitochondrial membrane that is then used for ATP synthesis.</text>
</comment>
<comment type="cofactor">
    <cofactor evidence="2">
        <name>heme b</name>
        <dbReference type="ChEBI" id="CHEBI:60344"/>
    </cofactor>
    <text evidence="2">Binds 2 heme b groups non-covalently.</text>
</comment>
<comment type="subunit">
    <text evidence="2">The cytochrome bc1 complex contains 11 subunits: 3 respiratory subunits (MT-CYB, CYC1 and UQCRFS1), 2 core proteins (UQCRC1 and UQCRC2) and 6 low-molecular weight proteins (UQCRH/QCR6, UQCRB/QCR7, UQCRQ/QCR8, UQCR10/QCR9, UQCR11/QCR10 and a cleavage product of UQCRFS1). This cytochrome bc1 complex then forms a dimer.</text>
</comment>
<comment type="subcellular location">
    <subcellularLocation>
        <location evidence="2">Mitochondrion inner membrane</location>
        <topology evidence="2">Multi-pass membrane protein</topology>
    </subcellularLocation>
</comment>
<comment type="miscellaneous">
    <text evidence="1">Heme 1 (or BL or b562) is low-potential and absorbs at about 562 nm, and heme 2 (or BH or b566) is high-potential and absorbs at about 566 nm.</text>
</comment>
<comment type="similarity">
    <text evidence="3 4">Belongs to the cytochrome b family.</text>
</comment>
<comment type="caution">
    <text evidence="2">The full-length protein contains only eight transmembrane helices, not nine as predicted by bioinformatics tools.</text>
</comment>
<protein>
    <recommendedName>
        <fullName>Cytochrome b</fullName>
    </recommendedName>
    <alternativeName>
        <fullName>Complex III subunit 3</fullName>
    </alternativeName>
    <alternativeName>
        <fullName>Complex III subunit III</fullName>
    </alternativeName>
    <alternativeName>
        <fullName>Cytochrome b-c1 complex subunit 3</fullName>
    </alternativeName>
    <alternativeName>
        <fullName>Ubiquinol-cytochrome-c reductase complex cytochrome b subunit</fullName>
    </alternativeName>
</protein>
<name>CYB_DIPSP</name>
<reference key="1">
    <citation type="journal article" date="2005" name="J. Mammal.">
        <title>Phylogenetics of the new world rodent family Heteromyidae.</title>
        <authorList>
            <person name="Alexander L.F."/>
            <person name="Riddle B.R."/>
        </authorList>
    </citation>
    <scope>NUCLEOTIDE SEQUENCE [GENOMIC DNA]</scope>
    <source>
        <strain>Isolate LVT 2470</strain>
    </source>
</reference>
<dbReference type="EMBL" id="AY926382">
    <property type="protein sequence ID" value="AAY23225.1"/>
    <property type="molecule type" value="Genomic_DNA"/>
</dbReference>
<dbReference type="SMR" id="Q508M1"/>
<dbReference type="GO" id="GO:0005743">
    <property type="term" value="C:mitochondrial inner membrane"/>
    <property type="evidence" value="ECO:0007669"/>
    <property type="project" value="UniProtKB-SubCell"/>
</dbReference>
<dbReference type="GO" id="GO:0045275">
    <property type="term" value="C:respiratory chain complex III"/>
    <property type="evidence" value="ECO:0007669"/>
    <property type="project" value="InterPro"/>
</dbReference>
<dbReference type="GO" id="GO:0046872">
    <property type="term" value="F:metal ion binding"/>
    <property type="evidence" value="ECO:0007669"/>
    <property type="project" value="UniProtKB-KW"/>
</dbReference>
<dbReference type="GO" id="GO:0008121">
    <property type="term" value="F:ubiquinol-cytochrome-c reductase activity"/>
    <property type="evidence" value="ECO:0007669"/>
    <property type="project" value="InterPro"/>
</dbReference>
<dbReference type="GO" id="GO:0006122">
    <property type="term" value="P:mitochondrial electron transport, ubiquinol to cytochrome c"/>
    <property type="evidence" value="ECO:0007669"/>
    <property type="project" value="TreeGrafter"/>
</dbReference>
<dbReference type="CDD" id="cd00290">
    <property type="entry name" value="cytochrome_b_C"/>
    <property type="match status" value="1"/>
</dbReference>
<dbReference type="CDD" id="cd00284">
    <property type="entry name" value="Cytochrome_b_N"/>
    <property type="match status" value="1"/>
</dbReference>
<dbReference type="FunFam" id="1.20.810.10:FF:000002">
    <property type="entry name" value="Cytochrome b"/>
    <property type="match status" value="1"/>
</dbReference>
<dbReference type="Gene3D" id="1.20.810.10">
    <property type="entry name" value="Cytochrome Bc1 Complex, Chain C"/>
    <property type="match status" value="1"/>
</dbReference>
<dbReference type="InterPro" id="IPR005798">
    <property type="entry name" value="Cyt_b/b6_C"/>
</dbReference>
<dbReference type="InterPro" id="IPR036150">
    <property type="entry name" value="Cyt_b/b6_C_sf"/>
</dbReference>
<dbReference type="InterPro" id="IPR005797">
    <property type="entry name" value="Cyt_b/b6_N"/>
</dbReference>
<dbReference type="InterPro" id="IPR027387">
    <property type="entry name" value="Cytb/b6-like_sf"/>
</dbReference>
<dbReference type="InterPro" id="IPR030689">
    <property type="entry name" value="Cytochrome_b"/>
</dbReference>
<dbReference type="InterPro" id="IPR048260">
    <property type="entry name" value="Cytochrome_b_C_euk/bac"/>
</dbReference>
<dbReference type="InterPro" id="IPR048259">
    <property type="entry name" value="Cytochrome_b_N_euk/bac"/>
</dbReference>
<dbReference type="InterPro" id="IPR016174">
    <property type="entry name" value="Di-haem_cyt_TM"/>
</dbReference>
<dbReference type="PANTHER" id="PTHR19271">
    <property type="entry name" value="CYTOCHROME B"/>
    <property type="match status" value="1"/>
</dbReference>
<dbReference type="PANTHER" id="PTHR19271:SF16">
    <property type="entry name" value="CYTOCHROME B"/>
    <property type="match status" value="1"/>
</dbReference>
<dbReference type="Pfam" id="PF00032">
    <property type="entry name" value="Cytochrom_B_C"/>
    <property type="match status" value="1"/>
</dbReference>
<dbReference type="Pfam" id="PF00033">
    <property type="entry name" value="Cytochrome_B"/>
    <property type="match status" value="1"/>
</dbReference>
<dbReference type="PIRSF" id="PIRSF038885">
    <property type="entry name" value="COB"/>
    <property type="match status" value="1"/>
</dbReference>
<dbReference type="SUPFAM" id="SSF81648">
    <property type="entry name" value="a domain/subunit of cytochrome bc1 complex (Ubiquinol-cytochrome c reductase)"/>
    <property type="match status" value="1"/>
</dbReference>
<dbReference type="SUPFAM" id="SSF81342">
    <property type="entry name" value="Transmembrane di-heme cytochromes"/>
    <property type="match status" value="1"/>
</dbReference>
<dbReference type="PROSITE" id="PS51003">
    <property type="entry name" value="CYTB_CTER"/>
    <property type="match status" value="1"/>
</dbReference>
<dbReference type="PROSITE" id="PS51002">
    <property type="entry name" value="CYTB_NTER"/>
    <property type="match status" value="1"/>
</dbReference>
<sequence>MTIMRKTHPLMKLVNHAFIDLPAPSNISGWWNFGSLLGMCLIIQITSGLFLAMHYTPDTLTAFSSVTHICRDVNYGWLIRYIHANGASLFFICLYLHIGRGIYYGSYSYMETWNIGIILLFLTMATAFMGYVLPWGQMSFWGATVITNLLSAIPYIGTDLVEWIWGGFSVDKATLNRFFAFHFILPFIIAAMAMVHLLFLHETGSNNPLGIPSDCDKIPFHPYYTTKDFLGIVLLLTFFLILVLFFPDLLGDPDNYSPANPLNTPPHIKPEWYFLFAYAILRSIPNKLGGVIALILSILILALLPHIQTASQRSLMFRPISQFLFWLLVSDVLILTWIGGQPVEPPFIIIGQIASLSYFTIILALMPIAGIIENKMLKW</sequence>
<gene>
    <name type="primary">MT-CYB</name>
    <name type="synonym">COB</name>
    <name type="synonym">CYTB</name>
    <name type="synonym">MTCYB</name>
</gene>
<geneLocation type="mitochondrion"/>
<accession>Q508M1</accession>
<feature type="chain" id="PRO_0000257892" description="Cytochrome b">
    <location>
        <begin position="1"/>
        <end position="379"/>
    </location>
</feature>
<feature type="transmembrane region" description="Helical" evidence="2">
    <location>
        <begin position="33"/>
        <end position="53"/>
    </location>
</feature>
<feature type="transmembrane region" description="Helical" evidence="2">
    <location>
        <begin position="77"/>
        <end position="98"/>
    </location>
</feature>
<feature type="transmembrane region" description="Helical" evidence="2">
    <location>
        <begin position="113"/>
        <end position="133"/>
    </location>
</feature>
<feature type="transmembrane region" description="Helical" evidence="2">
    <location>
        <begin position="178"/>
        <end position="198"/>
    </location>
</feature>
<feature type="transmembrane region" description="Helical" evidence="2">
    <location>
        <begin position="226"/>
        <end position="246"/>
    </location>
</feature>
<feature type="transmembrane region" description="Helical" evidence="2">
    <location>
        <begin position="288"/>
        <end position="308"/>
    </location>
</feature>
<feature type="transmembrane region" description="Helical" evidence="2">
    <location>
        <begin position="320"/>
        <end position="340"/>
    </location>
</feature>
<feature type="transmembrane region" description="Helical" evidence="2">
    <location>
        <begin position="347"/>
        <end position="367"/>
    </location>
</feature>
<feature type="binding site" description="axial binding residue" evidence="2">
    <location>
        <position position="83"/>
    </location>
    <ligand>
        <name>heme b</name>
        <dbReference type="ChEBI" id="CHEBI:60344"/>
        <label>b562</label>
    </ligand>
    <ligandPart>
        <name>Fe</name>
        <dbReference type="ChEBI" id="CHEBI:18248"/>
    </ligandPart>
</feature>
<feature type="binding site" description="axial binding residue" evidence="2">
    <location>
        <position position="97"/>
    </location>
    <ligand>
        <name>heme b</name>
        <dbReference type="ChEBI" id="CHEBI:60344"/>
        <label>b566</label>
    </ligand>
    <ligandPart>
        <name>Fe</name>
        <dbReference type="ChEBI" id="CHEBI:18248"/>
    </ligandPart>
</feature>
<feature type="binding site" description="axial binding residue" evidence="2">
    <location>
        <position position="182"/>
    </location>
    <ligand>
        <name>heme b</name>
        <dbReference type="ChEBI" id="CHEBI:60344"/>
        <label>b562</label>
    </ligand>
    <ligandPart>
        <name>Fe</name>
        <dbReference type="ChEBI" id="CHEBI:18248"/>
    </ligandPart>
</feature>
<feature type="binding site" description="axial binding residue" evidence="2">
    <location>
        <position position="196"/>
    </location>
    <ligand>
        <name>heme b</name>
        <dbReference type="ChEBI" id="CHEBI:60344"/>
        <label>b566</label>
    </ligand>
    <ligandPart>
        <name>Fe</name>
        <dbReference type="ChEBI" id="CHEBI:18248"/>
    </ligandPart>
</feature>
<feature type="binding site" evidence="2">
    <location>
        <position position="201"/>
    </location>
    <ligand>
        <name>a ubiquinone</name>
        <dbReference type="ChEBI" id="CHEBI:16389"/>
    </ligand>
</feature>
<proteinExistence type="inferred from homology"/>